<protein>
    <recommendedName>
        <fullName evidence="1">Ribonuclease HII</fullName>
        <shortName evidence="1">RNase HII</shortName>
        <ecNumber evidence="1">3.1.26.4</ecNumber>
    </recommendedName>
</protein>
<sequence length="257" mass="29101">MQTMTIKEAENVLKEIMNEEDDRFQLLMKDDRKGVQKLVLKWYKQKELEQKEKEKFFEMSKYENALREKGITYIAGIDEVGRGPLAGPVVTAAVVLPEDFYIPGLNDSKKLSEAKRERFYDEIKVQAIAIGVGIVSPQVIDDINIYQATKQAMLDAVANLSCTPQHLLIDAMKLPTPIPQTSIIKGDAKSVSISAASIIAKVTRDRMMKELGEKYPEYGFEQHMGYGTKQHLEAIEVHGVLDEHRKSFAPIKDMIQK</sequence>
<accession>B7HDW0</accession>
<organism>
    <name type="scientific">Bacillus cereus (strain B4264)</name>
    <dbReference type="NCBI Taxonomy" id="405532"/>
    <lineage>
        <taxon>Bacteria</taxon>
        <taxon>Bacillati</taxon>
        <taxon>Bacillota</taxon>
        <taxon>Bacilli</taxon>
        <taxon>Bacillales</taxon>
        <taxon>Bacillaceae</taxon>
        <taxon>Bacillus</taxon>
        <taxon>Bacillus cereus group</taxon>
    </lineage>
</organism>
<feature type="chain" id="PRO_1000116840" description="Ribonuclease HII">
    <location>
        <begin position="1"/>
        <end position="257"/>
    </location>
</feature>
<feature type="domain" description="RNase H type-2" evidence="2">
    <location>
        <begin position="72"/>
        <end position="257"/>
    </location>
</feature>
<feature type="binding site" evidence="1">
    <location>
        <position position="78"/>
    </location>
    <ligand>
        <name>a divalent metal cation</name>
        <dbReference type="ChEBI" id="CHEBI:60240"/>
    </ligand>
</feature>
<feature type="binding site" evidence="1">
    <location>
        <position position="79"/>
    </location>
    <ligand>
        <name>a divalent metal cation</name>
        <dbReference type="ChEBI" id="CHEBI:60240"/>
    </ligand>
</feature>
<feature type="binding site" evidence="1">
    <location>
        <position position="170"/>
    </location>
    <ligand>
        <name>a divalent metal cation</name>
        <dbReference type="ChEBI" id="CHEBI:60240"/>
    </ligand>
</feature>
<dbReference type="EC" id="3.1.26.4" evidence="1"/>
<dbReference type="EMBL" id="CP001176">
    <property type="protein sequence ID" value="ACK61839.1"/>
    <property type="molecule type" value="Genomic_DNA"/>
</dbReference>
<dbReference type="RefSeq" id="WP_001194260.1">
    <property type="nucleotide sequence ID" value="NC_011725.1"/>
</dbReference>
<dbReference type="SMR" id="B7HDW0"/>
<dbReference type="KEGG" id="bcb:BCB4264_A3935"/>
<dbReference type="HOGENOM" id="CLU_036532_2_1_9"/>
<dbReference type="Proteomes" id="UP000007096">
    <property type="component" value="Chromosome"/>
</dbReference>
<dbReference type="GO" id="GO:0005737">
    <property type="term" value="C:cytoplasm"/>
    <property type="evidence" value="ECO:0007669"/>
    <property type="project" value="UniProtKB-SubCell"/>
</dbReference>
<dbReference type="GO" id="GO:0032299">
    <property type="term" value="C:ribonuclease H2 complex"/>
    <property type="evidence" value="ECO:0007669"/>
    <property type="project" value="TreeGrafter"/>
</dbReference>
<dbReference type="GO" id="GO:0030145">
    <property type="term" value="F:manganese ion binding"/>
    <property type="evidence" value="ECO:0007669"/>
    <property type="project" value="UniProtKB-UniRule"/>
</dbReference>
<dbReference type="GO" id="GO:0003723">
    <property type="term" value="F:RNA binding"/>
    <property type="evidence" value="ECO:0007669"/>
    <property type="project" value="InterPro"/>
</dbReference>
<dbReference type="GO" id="GO:0004523">
    <property type="term" value="F:RNA-DNA hybrid ribonuclease activity"/>
    <property type="evidence" value="ECO:0007669"/>
    <property type="project" value="UniProtKB-UniRule"/>
</dbReference>
<dbReference type="GO" id="GO:0043137">
    <property type="term" value="P:DNA replication, removal of RNA primer"/>
    <property type="evidence" value="ECO:0007669"/>
    <property type="project" value="TreeGrafter"/>
</dbReference>
<dbReference type="GO" id="GO:0006298">
    <property type="term" value="P:mismatch repair"/>
    <property type="evidence" value="ECO:0007669"/>
    <property type="project" value="TreeGrafter"/>
</dbReference>
<dbReference type="CDD" id="cd07182">
    <property type="entry name" value="RNase_HII_bacteria_HII_like"/>
    <property type="match status" value="1"/>
</dbReference>
<dbReference type="FunFam" id="3.30.420.10:FF:000006">
    <property type="entry name" value="Ribonuclease HII"/>
    <property type="match status" value="1"/>
</dbReference>
<dbReference type="Gene3D" id="3.30.420.10">
    <property type="entry name" value="Ribonuclease H-like superfamily/Ribonuclease H"/>
    <property type="match status" value="1"/>
</dbReference>
<dbReference type="HAMAP" id="MF_00052_B">
    <property type="entry name" value="RNase_HII_B"/>
    <property type="match status" value="1"/>
</dbReference>
<dbReference type="InterPro" id="IPR022898">
    <property type="entry name" value="RNase_HII"/>
</dbReference>
<dbReference type="InterPro" id="IPR001352">
    <property type="entry name" value="RNase_HII/HIII"/>
</dbReference>
<dbReference type="InterPro" id="IPR024567">
    <property type="entry name" value="RNase_HII/HIII_dom"/>
</dbReference>
<dbReference type="InterPro" id="IPR012337">
    <property type="entry name" value="RNaseH-like_sf"/>
</dbReference>
<dbReference type="InterPro" id="IPR036397">
    <property type="entry name" value="RNaseH_sf"/>
</dbReference>
<dbReference type="NCBIfam" id="NF000594">
    <property type="entry name" value="PRK00015.1-1"/>
    <property type="match status" value="1"/>
</dbReference>
<dbReference type="NCBIfam" id="NF000595">
    <property type="entry name" value="PRK00015.1-3"/>
    <property type="match status" value="1"/>
</dbReference>
<dbReference type="PANTHER" id="PTHR10954">
    <property type="entry name" value="RIBONUCLEASE H2 SUBUNIT A"/>
    <property type="match status" value="1"/>
</dbReference>
<dbReference type="PANTHER" id="PTHR10954:SF18">
    <property type="entry name" value="RIBONUCLEASE HII"/>
    <property type="match status" value="1"/>
</dbReference>
<dbReference type="Pfam" id="PF01351">
    <property type="entry name" value="RNase_HII"/>
    <property type="match status" value="1"/>
</dbReference>
<dbReference type="SUPFAM" id="SSF53098">
    <property type="entry name" value="Ribonuclease H-like"/>
    <property type="match status" value="1"/>
</dbReference>
<dbReference type="PROSITE" id="PS51975">
    <property type="entry name" value="RNASE_H_2"/>
    <property type="match status" value="1"/>
</dbReference>
<evidence type="ECO:0000255" key="1">
    <source>
        <dbReference type="HAMAP-Rule" id="MF_00052"/>
    </source>
</evidence>
<evidence type="ECO:0000255" key="2">
    <source>
        <dbReference type="PROSITE-ProRule" id="PRU01319"/>
    </source>
</evidence>
<proteinExistence type="inferred from homology"/>
<name>RNH2_BACC4</name>
<gene>
    <name evidence="1" type="primary">rnhB</name>
    <name type="ordered locus">BCB4264_A3935</name>
</gene>
<keyword id="KW-0963">Cytoplasm</keyword>
<keyword id="KW-0255">Endonuclease</keyword>
<keyword id="KW-0378">Hydrolase</keyword>
<keyword id="KW-0464">Manganese</keyword>
<keyword id="KW-0479">Metal-binding</keyword>
<keyword id="KW-0540">Nuclease</keyword>
<comment type="function">
    <text evidence="1">Endonuclease that specifically degrades the RNA of RNA-DNA hybrids.</text>
</comment>
<comment type="catalytic activity">
    <reaction evidence="1">
        <text>Endonucleolytic cleavage to 5'-phosphomonoester.</text>
        <dbReference type="EC" id="3.1.26.4"/>
    </reaction>
</comment>
<comment type="cofactor">
    <cofactor evidence="1">
        <name>Mn(2+)</name>
        <dbReference type="ChEBI" id="CHEBI:29035"/>
    </cofactor>
    <cofactor evidence="1">
        <name>Mg(2+)</name>
        <dbReference type="ChEBI" id="CHEBI:18420"/>
    </cofactor>
    <text evidence="1">Manganese or magnesium. Binds 1 divalent metal ion per monomer in the absence of substrate. May bind a second metal ion after substrate binding.</text>
</comment>
<comment type="subcellular location">
    <subcellularLocation>
        <location evidence="1">Cytoplasm</location>
    </subcellularLocation>
</comment>
<comment type="similarity">
    <text evidence="1">Belongs to the RNase HII family.</text>
</comment>
<reference key="1">
    <citation type="submission" date="2008-10" db="EMBL/GenBank/DDBJ databases">
        <title>Genome sequence of Bacillus cereus B4264.</title>
        <authorList>
            <person name="Dodson R.J."/>
            <person name="Durkin A.S."/>
            <person name="Rosovitz M.J."/>
            <person name="Rasko D.A."/>
            <person name="Hoffmaster A."/>
            <person name="Ravel J."/>
            <person name="Sutton G."/>
        </authorList>
    </citation>
    <scope>NUCLEOTIDE SEQUENCE [LARGE SCALE GENOMIC DNA]</scope>
    <source>
        <strain>B4264</strain>
    </source>
</reference>